<feature type="chain" id="PRO_0000208207" description="2-acyl-1-lysophosphatidylinositol acyltransferase">
    <location>
        <begin position="1"/>
        <end position="397"/>
    </location>
</feature>
<feature type="short sequence motif" description="HXXXXD motif">
    <location>
        <begin position="112"/>
        <end position="117"/>
    </location>
</feature>
<keyword id="KW-0012">Acyltransferase</keyword>
<keyword id="KW-0444">Lipid biosynthesis</keyword>
<keyword id="KW-0551">Lipid droplet</keyword>
<keyword id="KW-0443">Lipid metabolism</keyword>
<keyword id="KW-0594">Phospholipid biosynthesis</keyword>
<keyword id="KW-1208">Phospholipid metabolism</keyword>
<keyword id="KW-1185">Reference proteome</keyword>
<keyword id="KW-0808">Transferase</keyword>
<sequence>MLHQKIAHKVRKVVVPGISLLIFFQGCLILLFLQLTYKTLYCRNDIRKQIGLNKTKRLFIVLVSSILHVVAPSAVRITTENSSVPKGTFFLDLKKKRILSHLKSNSVAICNHQIYTDWIFLWWLAYTSNLGANVFIILKKSLASIPILGFGMRNYNFIFMSRKWAQDKITLSNSLAGLDSNARGAGSLAGKSPERITEEGESIWNPEVIDPKQIHWPYNLILFPEGTNLSADTRQKSAKYAAKIGKKPFKNVLLPHSTGLRYSLQKLKPSIESLYDITIGYSGVKQEEYGELIYGLKSIFLEGKYPKLVDIHIRAFDVKDIPLEDENEFSEWLYKIWSEKDALMERYYSTGSFVSDPETNHSVTDSFKINRIELTEVLILPTLTIIWLVYKLYCFIF</sequence>
<name>CST26_YEAST</name>
<proteinExistence type="evidence at protein level"/>
<organism>
    <name type="scientific">Saccharomyces cerevisiae (strain ATCC 204508 / S288c)</name>
    <name type="common">Baker's yeast</name>
    <dbReference type="NCBI Taxonomy" id="559292"/>
    <lineage>
        <taxon>Eukaryota</taxon>
        <taxon>Fungi</taxon>
        <taxon>Dikarya</taxon>
        <taxon>Ascomycota</taxon>
        <taxon>Saccharomycotina</taxon>
        <taxon>Saccharomycetes</taxon>
        <taxon>Saccharomycetales</taxon>
        <taxon>Saccharomycetaceae</taxon>
        <taxon>Saccharomyces</taxon>
    </lineage>
</organism>
<gene>
    <name evidence="10" type="primary">CST26</name>
    <name evidence="11" type="synonym">PSI1</name>
    <name type="ordered locus">YBR042C</name>
    <name type="ORF">YBR0412</name>
</gene>
<reference key="1">
    <citation type="journal article" date="1994" name="EMBO J.">
        <title>Complete DNA sequence of yeast chromosome II.</title>
        <authorList>
            <person name="Feldmann H."/>
            <person name="Aigle M."/>
            <person name="Aljinovic G."/>
            <person name="Andre B."/>
            <person name="Baclet M.C."/>
            <person name="Barthe C."/>
            <person name="Baur A."/>
            <person name="Becam A.-M."/>
            <person name="Biteau N."/>
            <person name="Boles E."/>
            <person name="Brandt T."/>
            <person name="Brendel M."/>
            <person name="Brueckner M."/>
            <person name="Bussereau F."/>
            <person name="Christiansen C."/>
            <person name="Contreras R."/>
            <person name="Crouzet M."/>
            <person name="Cziepluch C."/>
            <person name="Demolis N."/>
            <person name="Delaveau T."/>
            <person name="Doignon F."/>
            <person name="Domdey H."/>
            <person name="Duesterhus S."/>
            <person name="Dubois E."/>
            <person name="Dujon B."/>
            <person name="El Bakkoury M."/>
            <person name="Entian K.-D."/>
            <person name="Feuermann M."/>
            <person name="Fiers W."/>
            <person name="Fobo G.M."/>
            <person name="Fritz C."/>
            <person name="Gassenhuber J."/>
            <person name="Glansdorff N."/>
            <person name="Goffeau A."/>
            <person name="Grivell L.A."/>
            <person name="de Haan M."/>
            <person name="Hein C."/>
            <person name="Herbert C.J."/>
            <person name="Hollenberg C.P."/>
            <person name="Holmstroem K."/>
            <person name="Jacq C."/>
            <person name="Jacquet M."/>
            <person name="Jauniaux J.-C."/>
            <person name="Jonniaux J.-L."/>
            <person name="Kallesoee T."/>
            <person name="Kiesau P."/>
            <person name="Kirchrath L."/>
            <person name="Koetter P."/>
            <person name="Korol S."/>
            <person name="Liebl S."/>
            <person name="Logghe M."/>
            <person name="Lohan A.J.E."/>
            <person name="Louis E.J."/>
            <person name="Li Z.Y."/>
            <person name="Maat M.J."/>
            <person name="Mallet L."/>
            <person name="Mannhaupt G."/>
            <person name="Messenguy F."/>
            <person name="Miosga T."/>
            <person name="Molemans F."/>
            <person name="Mueller S."/>
            <person name="Nasr F."/>
            <person name="Obermaier B."/>
            <person name="Perea J."/>
            <person name="Pierard A."/>
            <person name="Piravandi E."/>
            <person name="Pohl F.M."/>
            <person name="Pohl T.M."/>
            <person name="Potier S."/>
            <person name="Proft M."/>
            <person name="Purnelle B."/>
            <person name="Ramezani Rad M."/>
            <person name="Rieger M."/>
            <person name="Rose M."/>
            <person name="Schaaff-Gerstenschlaeger I."/>
            <person name="Scherens B."/>
            <person name="Schwarzlose C."/>
            <person name="Skala J."/>
            <person name="Slonimski P.P."/>
            <person name="Smits P.H.M."/>
            <person name="Souciet J.-L."/>
            <person name="Steensma H.Y."/>
            <person name="Stucka R."/>
            <person name="Urrestarazu L.A."/>
            <person name="van der Aart Q.J.M."/>
            <person name="Van Dyck L."/>
            <person name="Vassarotti A."/>
            <person name="Vetter I."/>
            <person name="Vierendeels F."/>
            <person name="Vissers S."/>
            <person name="Wagner G."/>
            <person name="de Wergifosse P."/>
            <person name="Wolfe K.H."/>
            <person name="Zagulski M."/>
            <person name="Zimmermann F.K."/>
            <person name="Mewes H.-W."/>
            <person name="Kleine K."/>
        </authorList>
    </citation>
    <scope>NUCLEOTIDE SEQUENCE [LARGE SCALE GENOMIC DNA]</scope>
    <source>
        <strain>ATCC 204508 / S288c</strain>
    </source>
</reference>
<reference key="2">
    <citation type="journal article" date="2014" name="G3 (Bethesda)">
        <title>The reference genome sequence of Saccharomyces cerevisiae: Then and now.</title>
        <authorList>
            <person name="Engel S.R."/>
            <person name="Dietrich F.S."/>
            <person name="Fisk D.G."/>
            <person name="Binkley G."/>
            <person name="Balakrishnan R."/>
            <person name="Costanzo M.C."/>
            <person name="Dwight S.S."/>
            <person name="Hitz B.C."/>
            <person name="Karra K."/>
            <person name="Nash R.S."/>
            <person name="Weng S."/>
            <person name="Wong E.D."/>
            <person name="Lloyd P."/>
            <person name="Skrzypek M.S."/>
            <person name="Miyasato S.R."/>
            <person name="Simison M."/>
            <person name="Cherry J.M."/>
        </authorList>
    </citation>
    <scope>GENOME REANNOTATION</scope>
    <source>
        <strain>ATCC 204508 / S288c</strain>
    </source>
</reference>
<reference key="3">
    <citation type="journal article" date="1999" name="Nucleic Acids Res.">
        <title>New yeast genes important for chromosome integrity and segregation identified by dosage effects on genome stability.</title>
        <authorList>
            <person name="Ouspenski I.I."/>
            <person name="Elledge S.J."/>
            <person name="Brinkley B.R."/>
        </authorList>
    </citation>
    <scope>IDENTIFICATION</scope>
    <scope>FUNCTION</scope>
</reference>
<reference key="4">
    <citation type="journal article" date="2003" name="Nature">
        <title>Global analysis of protein localization in budding yeast.</title>
        <authorList>
            <person name="Huh W.-K."/>
            <person name="Falvo J.V."/>
            <person name="Gerke L.C."/>
            <person name="Carroll A.S."/>
            <person name="Howson R.W."/>
            <person name="Weissman J.S."/>
            <person name="O'Shea E.K."/>
        </authorList>
    </citation>
    <scope>SUBCELLULAR LOCATION [LARGE SCALE ANALYSIS]</scope>
</reference>
<reference key="5">
    <citation type="journal article" date="2003" name="Nature">
        <title>Global analysis of protein expression in yeast.</title>
        <authorList>
            <person name="Ghaemmaghami S."/>
            <person name="Huh W.-K."/>
            <person name="Bower K."/>
            <person name="Howson R.W."/>
            <person name="Belle A."/>
            <person name="Dephoure N."/>
            <person name="O'Shea E.K."/>
            <person name="Weissman J.S."/>
        </authorList>
    </citation>
    <scope>LEVEL OF PROTEIN EXPRESSION [LARGE SCALE ANALYSIS]</scope>
</reference>
<reference key="6">
    <citation type="journal article" date="2005" name="Mol. Cell. Proteomics">
        <title>The spatial organization of lipid synthesis in the yeast Saccharomyces cerevisiae derived from large scale green fluorescent protein tagging and high resolution microscopy.</title>
        <authorList>
            <person name="Natter K."/>
            <person name="Leitner P."/>
            <person name="Faschinger A."/>
            <person name="Wolinski H."/>
            <person name="McCraith S."/>
            <person name="Fields S."/>
            <person name="Kohlwein S.D."/>
        </authorList>
    </citation>
    <scope>SUBCELLULAR LOCATION</scope>
</reference>
<reference key="7">
    <citation type="journal article" date="2009" name="FEBS J.">
        <title>PSI1 is responsible for the stearic acid enrichment that is characteristic of phosphatidylinositol in yeast.</title>
        <authorList>
            <person name="Le Guedard M."/>
            <person name="Bessoule J.J."/>
            <person name="Boyer V."/>
            <person name="Ayciriex S."/>
            <person name="Velours G."/>
            <person name="Kulik W."/>
            <person name="Ejsing C.S."/>
            <person name="Shevchenko A."/>
            <person name="Coulon D."/>
            <person name="Lessire R."/>
            <person name="Testet E."/>
        </authorList>
    </citation>
    <scope>FUNCTION</scope>
</reference>
<reference key="8">
    <citation type="journal article" date="2010" name="PLoS ONE">
        <title>Characterization of substrate preference for Slc1p and Cst26p in Saccharomyces cerevisiae using lipidomic approaches and an LPAAT activity assay.</title>
        <authorList>
            <person name="Shui G."/>
            <person name="Guan X.L."/>
            <person name="Gopalakrishnan P."/>
            <person name="Xue Y."/>
            <person name="Goh J.S."/>
            <person name="Yang H."/>
            <person name="Wenk M.R."/>
        </authorList>
    </citation>
    <scope>FUNCTION</scope>
    <scope>CATALYTIC ACTIVITY</scope>
    <scope>SUBCELLULAR LOCATION</scope>
</reference>
<reference key="9">
    <citation type="journal article" date="2012" name="Mol. Biol. Cell">
        <title>The yeast acyltransferase Sct1p regulates fatty acid desaturation by competing with the desaturase Ole1p.</title>
        <authorList>
            <person name="De Smet C.H."/>
            <person name="Vittone E."/>
            <person name="Scherer M."/>
            <person name="Houweling M."/>
            <person name="Liebisch G."/>
            <person name="Brouwers J.F."/>
            <person name="de Kroon A.I."/>
        </authorList>
    </citation>
    <scope>FUNCTION</scope>
</reference>
<reference key="10">
    <citation type="journal article" date="2016" name="Mol. Cell. Biol.">
        <title>Requirement of phosphoinositides containing stearic acid to control cell polarity.</title>
        <authorList>
            <person name="Doignon F."/>
            <person name="Laquel P."/>
            <person name="Testet E."/>
            <person name="Tuphile K."/>
            <person name="Fouillen L."/>
            <person name="Bessoule J.J."/>
        </authorList>
    </citation>
    <scope>FUNCTION</scope>
    <scope>DISRUPTION PHENOTYPE</scope>
</reference>
<reference key="11">
    <citation type="journal article" date="2016" name="PLoS Genet.">
        <title>Chemogenetic E-MAP in Saccharomyces cerevisiae for identification of membrane transporters operating lipid flip flop.</title>
        <authorList>
            <person name="Vazquez H.M."/>
            <person name="Vionnet C."/>
            <person name="Roubaty C."/>
            <person name="Mallela S.K."/>
            <person name="Schneiter R."/>
            <person name="Conzelmann A."/>
        </authorList>
    </citation>
    <scope>FUNCTION</scope>
</reference>
<comment type="function">
    <text evidence="2 5 6 7 8 9">Acyltransferase with lysophosphatidic acid acyltransferase (LPAAT) activity. Fatty acyl substrates include 18:0-acyl-CoA, 16:0-acyl-CoA, 17:0-acyl-CoA and 14:0-acyl-CoA (PubMed:20694142). Responsible for the acyl-CoA-dependent introduction of saturated very long chain fatty acids (VLCFAs) into phosphatidylinositol, transferring saturated FAs with 18 to 26 carbon atoms (PubMed:27462707). Responsible for the incorporation of stearate into phosphatidylinositol (PubMed:19796168, PubMed:26711260). Overexpression has an effect on chromosome stability (PubMed:10454593). Regulates phosphorylation and expression of glycerol-3-phosphate acyltransferase SCT1 (PubMed:22323296).</text>
</comment>
<comment type="catalytic activity">
    <reaction evidence="6">
        <text>1-heptadecanoyl-sn-glycero-3-phosphate + octadecanoyl-CoA = 1-heptadecanoyl-2-octadecanoyl-sn-glycero-3-phosphate + CoA</text>
        <dbReference type="Rhea" id="RHEA:44392"/>
        <dbReference type="ChEBI" id="CHEBI:57287"/>
        <dbReference type="ChEBI" id="CHEBI:57394"/>
        <dbReference type="ChEBI" id="CHEBI:74554"/>
        <dbReference type="ChEBI" id="CHEBI:84429"/>
    </reaction>
    <physiologicalReaction direction="left-to-right" evidence="14">
        <dbReference type="Rhea" id="RHEA:44393"/>
    </physiologicalReaction>
</comment>
<comment type="catalytic activity">
    <reaction evidence="6">
        <text>1-heptadecanoyl-sn-glycero-3-phosphate + tetradecanoyl-CoA = 1-heptadecanoyl-2-tetradecanoyl-sn-glycero-3-phosphate + CoA</text>
        <dbReference type="Rhea" id="RHEA:44388"/>
        <dbReference type="ChEBI" id="CHEBI:57287"/>
        <dbReference type="ChEBI" id="CHEBI:57385"/>
        <dbReference type="ChEBI" id="CHEBI:74554"/>
        <dbReference type="ChEBI" id="CHEBI:84428"/>
    </reaction>
    <physiologicalReaction direction="left-to-right" evidence="14">
        <dbReference type="Rhea" id="RHEA:44389"/>
    </physiologicalReaction>
</comment>
<comment type="catalytic activity">
    <reaction evidence="6">
        <text>1-heptadecanoyl-sn-glycero-3-phosphate + hexadecanoyl-CoA = 1-heptadecanoyl-2-hexadecanoyl-sn-glycero-3-phosphate + CoA</text>
        <dbReference type="Rhea" id="RHEA:44396"/>
        <dbReference type="ChEBI" id="CHEBI:57287"/>
        <dbReference type="ChEBI" id="CHEBI:57379"/>
        <dbReference type="ChEBI" id="CHEBI:74554"/>
        <dbReference type="ChEBI" id="CHEBI:84430"/>
    </reaction>
    <physiologicalReaction direction="left-to-right" evidence="14">
        <dbReference type="Rhea" id="RHEA:44397"/>
    </physiologicalReaction>
</comment>
<comment type="subcellular location">
    <subcellularLocation>
        <location evidence="3 4 6">Lipid droplet</location>
    </subcellularLocation>
</comment>
<comment type="domain">
    <text evidence="1">The HXXXXD motif is essential for acyltransferase activity and may constitute the binding site for the phosphate moiety of the glycerol-3-phosphate.</text>
</comment>
<comment type="disruption phenotype">
    <text evidence="8">Phosphoinositides (PIPs) with stearic acyl chains are strongly disturbed. Induces disturbances in intracellular trafficking, alterations in the budding pattern and defects in actin cytoskeleton organization.</text>
</comment>
<comment type="miscellaneous">
    <text evidence="4">Present with 2010 molecules/cell in log phase SD medium.</text>
</comment>
<comment type="similarity">
    <text evidence="13">Belongs to the 1-acyl-sn-glycerol-3-phosphate acyltransferase family.</text>
</comment>
<dbReference type="EC" id="2.3.-.-"/>
<dbReference type="EMBL" id="Z35911">
    <property type="protein sequence ID" value="CAA84984.1"/>
    <property type="molecule type" value="Genomic_DNA"/>
</dbReference>
<dbReference type="EMBL" id="BK006936">
    <property type="protein sequence ID" value="DAA07162.1"/>
    <property type="molecule type" value="Genomic_DNA"/>
</dbReference>
<dbReference type="PIR" id="S45900">
    <property type="entry name" value="S45900"/>
</dbReference>
<dbReference type="RefSeq" id="NP_009598.1">
    <property type="nucleotide sequence ID" value="NM_001178390.1"/>
</dbReference>
<dbReference type="BioGRID" id="32743">
    <property type="interactions" value="73"/>
</dbReference>
<dbReference type="DIP" id="DIP-5358N"/>
<dbReference type="FunCoup" id="P38226">
    <property type="interactions" value="336"/>
</dbReference>
<dbReference type="IntAct" id="P38226">
    <property type="interactions" value="3"/>
</dbReference>
<dbReference type="MINT" id="P38226"/>
<dbReference type="STRING" id="4932.YBR042C"/>
<dbReference type="SwissLipids" id="SLP:000000080"/>
<dbReference type="iPTMnet" id="P38226"/>
<dbReference type="PaxDb" id="4932-YBR042C"/>
<dbReference type="PeptideAtlas" id="P38226"/>
<dbReference type="EnsemblFungi" id="YBR042C_mRNA">
    <property type="protein sequence ID" value="YBR042C"/>
    <property type="gene ID" value="YBR042C"/>
</dbReference>
<dbReference type="GeneID" id="852330"/>
<dbReference type="KEGG" id="sce:YBR042C"/>
<dbReference type="AGR" id="SGD:S000000246"/>
<dbReference type="SGD" id="S000000246">
    <property type="gene designation" value="CST26"/>
</dbReference>
<dbReference type="VEuPathDB" id="FungiDB:YBR042C"/>
<dbReference type="eggNOG" id="KOG1505">
    <property type="taxonomic scope" value="Eukaryota"/>
</dbReference>
<dbReference type="GeneTree" id="ENSGT00950000182836"/>
<dbReference type="HOGENOM" id="CLU_041844_3_2_1"/>
<dbReference type="InParanoid" id="P38226"/>
<dbReference type="OMA" id="SITKYHE"/>
<dbReference type="OrthoDB" id="189226at2759"/>
<dbReference type="BioCyc" id="YEAST:G3O-29015-MONOMER"/>
<dbReference type="Reactome" id="R-SCE-1482798">
    <property type="pathway name" value="Acyl chain remodeling of CL"/>
</dbReference>
<dbReference type="Reactome" id="R-SCE-1482925">
    <property type="pathway name" value="Acyl chain remodelling of PG"/>
</dbReference>
<dbReference type="Reactome" id="R-SCE-1483166">
    <property type="pathway name" value="Synthesis of PA"/>
</dbReference>
<dbReference type="BioGRID-ORCS" id="852330">
    <property type="hits" value="5 hits in 10 CRISPR screens"/>
</dbReference>
<dbReference type="PRO" id="PR:P38226"/>
<dbReference type="Proteomes" id="UP000002311">
    <property type="component" value="Chromosome II"/>
</dbReference>
<dbReference type="RNAct" id="P38226">
    <property type="molecule type" value="protein"/>
</dbReference>
<dbReference type="GO" id="GO:0012505">
    <property type="term" value="C:endomembrane system"/>
    <property type="evidence" value="ECO:0000318"/>
    <property type="project" value="GO_Central"/>
</dbReference>
<dbReference type="GO" id="GO:0005783">
    <property type="term" value="C:endoplasmic reticulum"/>
    <property type="evidence" value="ECO:0000318"/>
    <property type="project" value="GO_Central"/>
</dbReference>
<dbReference type="GO" id="GO:0005811">
    <property type="term" value="C:lipid droplet"/>
    <property type="evidence" value="ECO:0007005"/>
    <property type="project" value="SGD"/>
</dbReference>
<dbReference type="GO" id="GO:0016746">
    <property type="term" value="F:acyltransferase activity"/>
    <property type="evidence" value="ECO:0000315"/>
    <property type="project" value="SGD"/>
</dbReference>
<dbReference type="GO" id="GO:0036149">
    <property type="term" value="P:phosphatidylinositol acyl-chain remodeling"/>
    <property type="evidence" value="ECO:0000315"/>
    <property type="project" value="SGD"/>
</dbReference>
<dbReference type="GO" id="GO:0008654">
    <property type="term" value="P:phospholipid biosynthetic process"/>
    <property type="evidence" value="ECO:0007669"/>
    <property type="project" value="UniProtKB-KW"/>
</dbReference>
<dbReference type="CDD" id="cd07990">
    <property type="entry name" value="LPLAT_LCLAT1-like"/>
    <property type="match status" value="1"/>
</dbReference>
<dbReference type="InterPro" id="IPR032098">
    <property type="entry name" value="Acyltransf_C"/>
</dbReference>
<dbReference type="InterPro" id="IPR002123">
    <property type="entry name" value="Plipid/glycerol_acylTrfase"/>
</dbReference>
<dbReference type="PANTHER" id="PTHR10983">
    <property type="entry name" value="1-ACYLGLYCEROL-3-PHOSPHATE ACYLTRANSFERASE-RELATED"/>
    <property type="match status" value="1"/>
</dbReference>
<dbReference type="PANTHER" id="PTHR10983:SF16">
    <property type="entry name" value="LYSOCARDIOLIPIN ACYLTRANSFERASE 1"/>
    <property type="match status" value="1"/>
</dbReference>
<dbReference type="Pfam" id="PF16076">
    <property type="entry name" value="Acyltransf_C"/>
    <property type="match status" value="1"/>
</dbReference>
<dbReference type="Pfam" id="PF01553">
    <property type="entry name" value="Acyltransferase"/>
    <property type="match status" value="1"/>
</dbReference>
<dbReference type="SMART" id="SM00563">
    <property type="entry name" value="PlsC"/>
    <property type="match status" value="1"/>
</dbReference>
<dbReference type="SUPFAM" id="SSF69593">
    <property type="entry name" value="Glycerol-3-phosphate (1)-acyltransferase"/>
    <property type="match status" value="1"/>
</dbReference>
<protein>
    <recommendedName>
        <fullName evidence="11">2-acyl-1-lysophosphatidylinositol acyltransferase</fullName>
        <ecNumber>2.3.-.-</ecNumber>
    </recommendedName>
    <alternativeName>
        <fullName evidence="12">Acyl-CoA:lyso-PI acyltransferase</fullName>
    </alternativeName>
    <alternativeName>
        <fullName evidence="10">Chromosome stability protein 26</fullName>
    </alternativeName>
    <alternativeName>
        <fullName evidence="11">Phosphatidylinositol stearoyl incorporating protein 1</fullName>
    </alternativeName>
</protein>
<evidence type="ECO:0000250" key="1"/>
<evidence type="ECO:0000269" key="2">
    <source>
    </source>
</evidence>
<evidence type="ECO:0000269" key="3">
    <source>
    </source>
</evidence>
<evidence type="ECO:0000269" key="4">
    <source>
    </source>
</evidence>
<evidence type="ECO:0000269" key="5">
    <source>
    </source>
</evidence>
<evidence type="ECO:0000269" key="6">
    <source>
    </source>
</evidence>
<evidence type="ECO:0000269" key="7">
    <source>
    </source>
</evidence>
<evidence type="ECO:0000269" key="8">
    <source>
    </source>
</evidence>
<evidence type="ECO:0000269" key="9">
    <source>
    </source>
</evidence>
<evidence type="ECO:0000303" key="10">
    <source>
    </source>
</evidence>
<evidence type="ECO:0000303" key="11">
    <source>
    </source>
</evidence>
<evidence type="ECO:0000303" key="12">
    <source>
    </source>
</evidence>
<evidence type="ECO:0000305" key="13"/>
<evidence type="ECO:0000305" key="14">
    <source>
    </source>
</evidence>
<accession>P38226</accession>
<accession>D6VQ42</accession>